<proteinExistence type="inferred from homology"/>
<feature type="chain" id="PRO_0000242941" description="tRNA uridine(34) hydroxylase">
    <location>
        <begin position="1"/>
        <end position="309"/>
    </location>
</feature>
<feature type="domain" description="Rhodanese" evidence="1">
    <location>
        <begin position="123"/>
        <end position="217"/>
    </location>
</feature>
<feature type="active site" description="Cysteine persulfide intermediate" evidence="1">
    <location>
        <position position="177"/>
    </location>
</feature>
<dbReference type="EC" id="1.14.-.-" evidence="1"/>
<dbReference type="EMBL" id="CP000282">
    <property type="protein sequence ID" value="ABD80574.1"/>
    <property type="molecule type" value="Genomic_DNA"/>
</dbReference>
<dbReference type="RefSeq" id="WP_011467794.1">
    <property type="nucleotide sequence ID" value="NC_007912.1"/>
</dbReference>
<dbReference type="SMR" id="Q21L55"/>
<dbReference type="STRING" id="203122.Sde_1312"/>
<dbReference type="GeneID" id="98612989"/>
<dbReference type="KEGG" id="sde:Sde_1312"/>
<dbReference type="eggNOG" id="COG1054">
    <property type="taxonomic scope" value="Bacteria"/>
</dbReference>
<dbReference type="HOGENOM" id="CLU_038878_0_0_6"/>
<dbReference type="OrthoDB" id="9778326at2"/>
<dbReference type="Proteomes" id="UP000001947">
    <property type="component" value="Chromosome"/>
</dbReference>
<dbReference type="GO" id="GO:0016705">
    <property type="term" value="F:oxidoreductase activity, acting on paired donors, with incorporation or reduction of molecular oxygen"/>
    <property type="evidence" value="ECO:0007669"/>
    <property type="project" value="UniProtKB-UniRule"/>
</dbReference>
<dbReference type="GO" id="GO:0006400">
    <property type="term" value="P:tRNA modification"/>
    <property type="evidence" value="ECO:0007669"/>
    <property type="project" value="UniProtKB-UniRule"/>
</dbReference>
<dbReference type="CDD" id="cd01518">
    <property type="entry name" value="RHOD_YceA"/>
    <property type="match status" value="1"/>
</dbReference>
<dbReference type="Gene3D" id="3.30.70.100">
    <property type="match status" value="1"/>
</dbReference>
<dbReference type="Gene3D" id="3.40.250.10">
    <property type="entry name" value="Rhodanese-like domain"/>
    <property type="match status" value="1"/>
</dbReference>
<dbReference type="HAMAP" id="MF_00469">
    <property type="entry name" value="TrhO"/>
    <property type="match status" value="1"/>
</dbReference>
<dbReference type="InterPro" id="IPR001763">
    <property type="entry name" value="Rhodanese-like_dom"/>
</dbReference>
<dbReference type="InterPro" id="IPR036873">
    <property type="entry name" value="Rhodanese-like_dom_sf"/>
</dbReference>
<dbReference type="InterPro" id="IPR020936">
    <property type="entry name" value="TrhO"/>
</dbReference>
<dbReference type="InterPro" id="IPR040503">
    <property type="entry name" value="TRHO_N"/>
</dbReference>
<dbReference type="NCBIfam" id="NF001135">
    <property type="entry name" value="PRK00142.1-3"/>
    <property type="match status" value="1"/>
</dbReference>
<dbReference type="NCBIfam" id="NF001136">
    <property type="entry name" value="PRK00142.1-4"/>
    <property type="match status" value="1"/>
</dbReference>
<dbReference type="PANTHER" id="PTHR43268:SF3">
    <property type="entry name" value="RHODANESE-LIKE DOMAIN-CONTAINING PROTEIN 7-RELATED"/>
    <property type="match status" value="1"/>
</dbReference>
<dbReference type="PANTHER" id="PTHR43268">
    <property type="entry name" value="THIOSULFATE SULFURTRANSFERASE/RHODANESE-LIKE DOMAIN-CONTAINING PROTEIN 2"/>
    <property type="match status" value="1"/>
</dbReference>
<dbReference type="Pfam" id="PF00581">
    <property type="entry name" value="Rhodanese"/>
    <property type="match status" value="1"/>
</dbReference>
<dbReference type="Pfam" id="PF17773">
    <property type="entry name" value="UPF0176_N"/>
    <property type="match status" value="1"/>
</dbReference>
<dbReference type="SMART" id="SM00450">
    <property type="entry name" value="RHOD"/>
    <property type="match status" value="1"/>
</dbReference>
<dbReference type="SUPFAM" id="SSF52821">
    <property type="entry name" value="Rhodanese/Cell cycle control phosphatase"/>
    <property type="match status" value="1"/>
</dbReference>
<dbReference type="PROSITE" id="PS50206">
    <property type="entry name" value="RHODANESE_3"/>
    <property type="match status" value="1"/>
</dbReference>
<gene>
    <name evidence="1" type="primary">trhO</name>
    <name type="ordered locus">Sde_1312</name>
</gene>
<name>TRHO_SACD2</name>
<protein>
    <recommendedName>
        <fullName evidence="1">tRNA uridine(34) hydroxylase</fullName>
        <ecNumber evidence="1">1.14.-.-</ecNumber>
    </recommendedName>
    <alternativeName>
        <fullName evidence="1">tRNA hydroxylation protein O</fullName>
    </alternativeName>
</protein>
<sequence length="309" mass="35267">MPQIVIAALYKFVSLPDFEALREPLQAFCIENEIKGTLLLAQEGINGTVAGRREAIDALLAYFGKDARLADIDHKESYEEEQPFYRMKVKLKKEIVTMGVEGIDPNNIVGTYVEPKDWNSLIDDPEVIVVDTRNNYEYDIGTFEGALNPNTESFRELPEYVAKNLDPAKHKKVAMFCTGGIRCEKSTAFMKQRGFEEVYHLKGGILKYLEEVPEEQTRWKGECFVFDNRVAVNHALEKGTYDLCHGCRYPITEEDKKSEKYIEGVACPHCHDTQTPDQRARFMERQKQVQLAKARKQAHIGAPAPSRQK</sequence>
<organism>
    <name type="scientific">Saccharophagus degradans (strain 2-40 / ATCC 43961 / DSM 17024)</name>
    <dbReference type="NCBI Taxonomy" id="203122"/>
    <lineage>
        <taxon>Bacteria</taxon>
        <taxon>Pseudomonadati</taxon>
        <taxon>Pseudomonadota</taxon>
        <taxon>Gammaproteobacteria</taxon>
        <taxon>Cellvibrionales</taxon>
        <taxon>Cellvibrionaceae</taxon>
        <taxon>Saccharophagus</taxon>
    </lineage>
</organism>
<reference key="1">
    <citation type="journal article" date="2008" name="PLoS Genet.">
        <title>Complete genome sequence of the complex carbohydrate-degrading marine bacterium, Saccharophagus degradans strain 2-40 T.</title>
        <authorList>
            <person name="Weiner R.M."/>
            <person name="Taylor L.E. II"/>
            <person name="Henrissat B."/>
            <person name="Hauser L."/>
            <person name="Land M."/>
            <person name="Coutinho P.M."/>
            <person name="Rancurel C."/>
            <person name="Saunders E.H."/>
            <person name="Longmire A.G."/>
            <person name="Zhang H."/>
            <person name="Bayer E.A."/>
            <person name="Gilbert H.J."/>
            <person name="Larimer F."/>
            <person name="Zhulin I.B."/>
            <person name="Ekborg N.A."/>
            <person name="Lamed R."/>
            <person name="Richardson P.M."/>
            <person name="Borovok I."/>
            <person name="Hutcheson S."/>
        </authorList>
    </citation>
    <scope>NUCLEOTIDE SEQUENCE [LARGE SCALE GENOMIC DNA]</scope>
    <source>
        <strain>2-40 / ATCC 43961 / DSM 17024</strain>
    </source>
</reference>
<evidence type="ECO:0000255" key="1">
    <source>
        <dbReference type="HAMAP-Rule" id="MF_00469"/>
    </source>
</evidence>
<comment type="function">
    <text evidence="1">Catalyzes oxygen-dependent 5-hydroxyuridine (ho5U) modification at position 34 in tRNAs.</text>
</comment>
<comment type="catalytic activity">
    <reaction evidence="1">
        <text>uridine(34) in tRNA + AH2 + O2 = 5-hydroxyuridine(34) in tRNA + A + H2O</text>
        <dbReference type="Rhea" id="RHEA:64224"/>
        <dbReference type="Rhea" id="RHEA-COMP:11727"/>
        <dbReference type="Rhea" id="RHEA-COMP:13381"/>
        <dbReference type="ChEBI" id="CHEBI:13193"/>
        <dbReference type="ChEBI" id="CHEBI:15377"/>
        <dbReference type="ChEBI" id="CHEBI:15379"/>
        <dbReference type="ChEBI" id="CHEBI:17499"/>
        <dbReference type="ChEBI" id="CHEBI:65315"/>
        <dbReference type="ChEBI" id="CHEBI:136877"/>
    </reaction>
</comment>
<comment type="similarity">
    <text evidence="1">Belongs to the TrhO family.</text>
</comment>
<keyword id="KW-0560">Oxidoreductase</keyword>
<keyword id="KW-1185">Reference proteome</keyword>
<keyword id="KW-0819">tRNA processing</keyword>
<accession>Q21L55</accession>